<sequence length="105" mass="11448">MNRLKKGDDVIVIAGKDKGRRGVVKSFAKGGSLVLVEGINIVKKHVKPNPNRGVEGGVVEKELPVDASNVAIFNPATEKADRVGYKFVDEKKVRYFKSNGELVDL</sequence>
<gene>
    <name evidence="1" type="primary">rplX</name>
    <name type="ordered locus">Fphi_0576</name>
</gene>
<comment type="function">
    <text evidence="1">One of two assembly initiator proteins, it binds directly to the 5'-end of the 23S rRNA, where it nucleates assembly of the 50S subunit.</text>
</comment>
<comment type="function">
    <text evidence="1">One of the proteins that surrounds the polypeptide exit tunnel on the outside of the subunit.</text>
</comment>
<comment type="subunit">
    <text evidence="1">Part of the 50S ribosomal subunit.</text>
</comment>
<comment type="similarity">
    <text evidence="1">Belongs to the universal ribosomal protein uL24 family.</text>
</comment>
<reference key="1">
    <citation type="submission" date="2007-12" db="EMBL/GenBank/DDBJ databases">
        <title>Complete sequence of chromosome of Francisella philomiragia subsp. philomiragia ATCC 25017.</title>
        <authorList>
            <consortium name="US DOE Joint Genome Institute"/>
            <person name="Copeland A."/>
            <person name="Lucas S."/>
            <person name="Lapidus A."/>
            <person name="Barry K."/>
            <person name="Detter J.C."/>
            <person name="Glavina del Rio T."/>
            <person name="Hammon N."/>
            <person name="Israni S."/>
            <person name="Dalin E."/>
            <person name="Tice H."/>
            <person name="Pitluck S."/>
            <person name="Chain P."/>
            <person name="Malfatti S."/>
            <person name="Shin M."/>
            <person name="Vergez L."/>
            <person name="Schmutz J."/>
            <person name="Larimer F."/>
            <person name="Land M."/>
            <person name="Hauser L."/>
            <person name="Richardson P."/>
        </authorList>
    </citation>
    <scope>NUCLEOTIDE SEQUENCE [LARGE SCALE GENOMIC DNA]</scope>
    <source>
        <strain>ATCC 25017 / CCUG 19701 / FSC 153 / O#319-036</strain>
    </source>
</reference>
<keyword id="KW-0687">Ribonucleoprotein</keyword>
<keyword id="KW-0689">Ribosomal protein</keyword>
<keyword id="KW-0694">RNA-binding</keyword>
<keyword id="KW-0699">rRNA-binding</keyword>
<name>RL24_FRAP2</name>
<dbReference type="EMBL" id="CP000937">
    <property type="protein sequence ID" value="ABZ86794.1"/>
    <property type="molecule type" value="Genomic_DNA"/>
</dbReference>
<dbReference type="SMR" id="B0U0X8"/>
<dbReference type="KEGG" id="fph:Fphi_0576"/>
<dbReference type="eggNOG" id="COG0198">
    <property type="taxonomic scope" value="Bacteria"/>
</dbReference>
<dbReference type="HOGENOM" id="CLU_093315_2_2_6"/>
<dbReference type="GO" id="GO:1990904">
    <property type="term" value="C:ribonucleoprotein complex"/>
    <property type="evidence" value="ECO:0007669"/>
    <property type="project" value="UniProtKB-KW"/>
</dbReference>
<dbReference type="GO" id="GO:0005840">
    <property type="term" value="C:ribosome"/>
    <property type="evidence" value="ECO:0007669"/>
    <property type="project" value="UniProtKB-KW"/>
</dbReference>
<dbReference type="GO" id="GO:0019843">
    <property type="term" value="F:rRNA binding"/>
    <property type="evidence" value="ECO:0007669"/>
    <property type="project" value="UniProtKB-UniRule"/>
</dbReference>
<dbReference type="GO" id="GO:0003735">
    <property type="term" value="F:structural constituent of ribosome"/>
    <property type="evidence" value="ECO:0007669"/>
    <property type="project" value="InterPro"/>
</dbReference>
<dbReference type="GO" id="GO:0006412">
    <property type="term" value="P:translation"/>
    <property type="evidence" value="ECO:0007669"/>
    <property type="project" value="UniProtKB-UniRule"/>
</dbReference>
<dbReference type="CDD" id="cd06089">
    <property type="entry name" value="KOW_RPL26"/>
    <property type="match status" value="1"/>
</dbReference>
<dbReference type="FunFam" id="2.30.30.30:FF:000004">
    <property type="entry name" value="50S ribosomal protein L24"/>
    <property type="match status" value="1"/>
</dbReference>
<dbReference type="Gene3D" id="2.30.30.30">
    <property type="match status" value="1"/>
</dbReference>
<dbReference type="HAMAP" id="MF_01326_B">
    <property type="entry name" value="Ribosomal_uL24_B"/>
    <property type="match status" value="1"/>
</dbReference>
<dbReference type="InterPro" id="IPR005824">
    <property type="entry name" value="KOW"/>
</dbReference>
<dbReference type="InterPro" id="IPR014722">
    <property type="entry name" value="Rib_uL2_dom2"/>
</dbReference>
<dbReference type="InterPro" id="IPR003256">
    <property type="entry name" value="Ribosomal_uL24"/>
</dbReference>
<dbReference type="InterPro" id="IPR005825">
    <property type="entry name" value="Ribosomal_uL24_CS"/>
</dbReference>
<dbReference type="InterPro" id="IPR041988">
    <property type="entry name" value="Ribosomal_uL24_KOW"/>
</dbReference>
<dbReference type="InterPro" id="IPR008991">
    <property type="entry name" value="Translation_prot_SH3-like_sf"/>
</dbReference>
<dbReference type="NCBIfam" id="TIGR01079">
    <property type="entry name" value="rplX_bact"/>
    <property type="match status" value="1"/>
</dbReference>
<dbReference type="PANTHER" id="PTHR12903">
    <property type="entry name" value="MITOCHONDRIAL RIBOSOMAL PROTEIN L24"/>
    <property type="match status" value="1"/>
</dbReference>
<dbReference type="Pfam" id="PF00467">
    <property type="entry name" value="KOW"/>
    <property type="match status" value="1"/>
</dbReference>
<dbReference type="Pfam" id="PF17136">
    <property type="entry name" value="ribosomal_L24"/>
    <property type="match status" value="1"/>
</dbReference>
<dbReference type="SUPFAM" id="SSF50104">
    <property type="entry name" value="Translation proteins SH3-like domain"/>
    <property type="match status" value="1"/>
</dbReference>
<dbReference type="PROSITE" id="PS01108">
    <property type="entry name" value="RIBOSOMAL_L24"/>
    <property type="match status" value="1"/>
</dbReference>
<evidence type="ECO:0000255" key="1">
    <source>
        <dbReference type="HAMAP-Rule" id="MF_01326"/>
    </source>
</evidence>
<evidence type="ECO:0000305" key="2"/>
<organism>
    <name type="scientific">Francisella philomiragia subsp. philomiragia (strain ATCC 25017 / CCUG 19701 / FSC 153 / O#319-036)</name>
    <dbReference type="NCBI Taxonomy" id="484022"/>
    <lineage>
        <taxon>Bacteria</taxon>
        <taxon>Pseudomonadati</taxon>
        <taxon>Pseudomonadota</taxon>
        <taxon>Gammaproteobacteria</taxon>
        <taxon>Thiotrichales</taxon>
        <taxon>Francisellaceae</taxon>
        <taxon>Francisella</taxon>
    </lineage>
</organism>
<proteinExistence type="inferred from homology"/>
<accession>B0U0X8</accession>
<feature type="chain" id="PRO_1000086481" description="Large ribosomal subunit protein uL24">
    <location>
        <begin position="1"/>
        <end position="105"/>
    </location>
</feature>
<protein>
    <recommendedName>
        <fullName evidence="1">Large ribosomal subunit protein uL24</fullName>
    </recommendedName>
    <alternativeName>
        <fullName evidence="2">50S ribosomal protein L24</fullName>
    </alternativeName>
</protein>